<accession>Q7QBW0</accession>
<feature type="chain" id="PRO_0000367140" description="Spastin">
    <location>
        <begin position="1"/>
        <end position="827"/>
    </location>
</feature>
<feature type="topological domain" description="Cytoplasmic" evidence="2">
    <location>
        <begin position="1"/>
        <end position="79"/>
    </location>
</feature>
<feature type="intramembrane region" description="Helical" evidence="2">
    <location>
        <begin position="80"/>
        <end position="100"/>
    </location>
</feature>
<feature type="topological domain" description="Cytoplasmic" evidence="2">
    <location>
        <begin position="101"/>
        <end position="827"/>
    </location>
</feature>
<feature type="domain" description="MIT" evidence="1">
    <location>
        <begin position="231"/>
        <end position="306"/>
    </location>
</feature>
<feature type="region of interest" description="Disordered" evidence="3">
    <location>
        <begin position="1"/>
        <end position="58"/>
    </location>
</feature>
<feature type="region of interest" description="Disordered" evidence="3">
    <location>
        <begin position="127"/>
        <end position="190"/>
    </location>
</feature>
<feature type="region of interest" description="Disordered" evidence="3">
    <location>
        <begin position="207"/>
        <end position="229"/>
    </location>
</feature>
<feature type="region of interest" description="Disordered" evidence="3">
    <location>
        <begin position="358"/>
        <end position="381"/>
    </location>
</feature>
<feature type="region of interest" description="Disordered" evidence="3">
    <location>
        <begin position="398"/>
        <end position="433"/>
    </location>
</feature>
<feature type="region of interest" description="Disordered" evidence="3">
    <location>
        <begin position="476"/>
        <end position="526"/>
    </location>
</feature>
<feature type="compositionally biased region" description="Polar residues" evidence="3">
    <location>
        <begin position="1"/>
        <end position="13"/>
    </location>
</feature>
<feature type="compositionally biased region" description="Low complexity" evidence="3">
    <location>
        <begin position="38"/>
        <end position="50"/>
    </location>
</feature>
<feature type="compositionally biased region" description="Basic residues" evidence="3">
    <location>
        <begin position="129"/>
        <end position="141"/>
    </location>
</feature>
<feature type="compositionally biased region" description="Low complexity" evidence="3">
    <location>
        <begin position="142"/>
        <end position="190"/>
    </location>
</feature>
<feature type="compositionally biased region" description="Low complexity" evidence="3">
    <location>
        <begin position="364"/>
        <end position="381"/>
    </location>
</feature>
<feature type="compositionally biased region" description="Low complexity" evidence="3">
    <location>
        <begin position="476"/>
        <end position="486"/>
    </location>
</feature>
<feature type="compositionally biased region" description="Low complexity" evidence="3">
    <location>
        <begin position="510"/>
        <end position="524"/>
    </location>
</feature>
<feature type="binding site" evidence="2">
    <location>
        <begin position="592"/>
        <end position="599"/>
    </location>
    <ligand>
        <name>ATP</name>
        <dbReference type="ChEBI" id="CHEBI:30616"/>
    </ligand>
</feature>
<gene>
    <name type="primary">spas</name>
    <name type="ORF">AGAP002334</name>
</gene>
<comment type="function">
    <text evidence="2">ATP-dependent microtubule severing protein. Microtubule severing may promote reorganization of cellular microtubule arrays and the release of microtubules from the microtubule organizing center following nucleation.</text>
</comment>
<comment type="catalytic activity">
    <reaction evidence="2">
        <text>n ATP + n H2O + a microtubule = n ADP + n phosphate + (n+1) alpha/beta tubulin heterodimers.</text>
        <dbReference type="EC" id="5.6.1.1"/>
    </reaction>
</comment>
<comment type="subunit">
    <text evidence="2">Homohexamer. The homohexamer is stabilized by ATP-binding. The homohexamer may adopt a ring conformation through which microtubules pass prior to being severed. Interacts with microtubules.</text>
</comment>
<comment type="subcellular location">
    <subcellularLocation>
        <location evidence="2">Membrane</location>
        <topology evidence="2">Peripheral membrane protein</topology>
    </subcellularLocation>
    <subcellularLocation>
        <location evidence="2">Cytoplasm</location>
        <location evidence="2">Cytoskeleton</location>
        <location evidence="2">Microtubule organizing center</location>
        <location evidence="2">Centrosome</location>
    </subcellularLocation>
    <subcellularLocation>
        <location evidence="2">Cytoplasm</location>
        <location evidence="2">Cytoskeleton</location>
    </subcellularLocation>
    <text evidence="2">Forms an intramembrane hairpin-like structure in the membrane.</text>
</comment>
<comment type="similarity">
    <text evidence="2">Belongs to the AAA ATPase family. Spastin subfamily.</text>
</comment>
<reference key="1">
    <citation type="journal article" date="2002" name="Science">
        <title>The genome sequence of the malaria mosquito Anopheles gambiae.</title>
        <authorList>
            <person name="Holt R.A."/>
            <person name="Subramanian G.M."/>
            <person name="Halpern A."/>
            <person name="Sutton G.G."/>
            <person name="Charlab R."/>
            <person name="Nusskern D.R."/>
            <person name="Wincker P."/>
            <person name="Clark A.G."/>
            <person name="Ribeiro J.M.C."/>
            <person name="Wides R."/>
            <person name="Salzberg S.L."/>
            <person name="Loftus B.J."/>
            <person name="Yandell M.D."/>
            <person name="Majoros W.H."/>
            <person name="Rusch D.B."/>
            <person name="Lai Z."/>
            <person name="Kraft C.L."/>
            <person name="Abril J.F."/>
            <person name="Anthouard V."/>
            <person name="Arensburger P."/>
            <person name="Atkinson P.W."/>
            <person name="Baden H."/>
            <person name="de Berardinis V."/>
            <person name="Baldwin D."/>
            <person name="Benes V."/>
            <person name="Biedler J."/>
            <person name="Blass C."/>
            <person name="Bolanos R."/>
            <person name="Boscus D."/>
            <person name="Barnstead M."/>
            <person name="Cai S."/>
            <person name="Center A."/>
            <person name="Chaturverdi K."/>
            <person name="Christophides G.K."/>
            <person name="Chrystal M.A.M."/>
            <person name="Clamp M."/>
            <person name="Cravchik A."/>
            <person name="Curwen V."/>
            <person name="Dana A."/>
            <person name="Delcher A."/>
            <person name="Dew I."/>
            <person name="Evans C.A."/>
            <person name="Flanigan M."/>
            <person name="Grundschober-Freimoser A."/>
            <person name="Friedli L."/>
            <person name="Gu Z."/>
            <person name="Guan P."/>
            <person name="Guigo R."/>
            <person name="Hillenmeyer M.E."/>
            <person name="Hladun S.L."/>
            <person name="Hogan J.R."/>
            <person name="Hong Y.S."/>
            <person name="Hoover J."/>
            <person name="Jaillon O."/>
            <person name="Ke Z."/>
            <person name="Kodira C.D."/>
            <person name="Kokoza E."/>
            <person name="Koutsos A."/>
            <person name="Letunic I."/>
            <person name="Levitsky A.A."/>
            <person name="Liang Y."/>
            <person name="Lin J.-J."/>
            <person name="Lobo N.F."/>
            <person name="Lopez J.R."/>
            <person name="Malek J.A."/>
            <person name="McIntosh T.C."/>
            <person name="Meister S."/>
            <person name="Miller J.R."/>
            <person name="Mobarry C."/>
            <person name="Mongin E."/>
            <person name="Murphy S.D."/>
            <person name="O'Brochta D.A."/>
            <person name="Pfannkoch C."/>
            <person name="Qi R."/>
            <person name="Regier M.A."/>
            <person name="Remington K."/>
            <person name="Shao H."/>
            <person name="Sharakhova M.V."/>
            <person name="Sitter C.D."/>
            <person name="Shetty J."/>
            <person name="Smith T.J."/>
            <person name="Strong R."/>
            <person name="Sun J."/>
            <person name="Thomasova D."/>
            <person name="Ton L.Q."/>
            <person name="Topalis P."/>
            <person name="Tu Z.J."/>
            <person name="Unger M.F."/>
            <person name="Walenz B."/>
            <person name="Wang A.H."/>
            <person name="Wang J."/>
            <person name="Wang M."/>
            <person name="Wang X."/>
            <person name="Woodford K.J."/>
            <person name="Wortman J.R."/>
            <person name="Wu M."/>
            <person name="Yao A."/>
            <person name="Zdobnov E.M."/>
            <person name="Zhang H."/>
            <person name="Zhao Q."/>
            <person name="Zhao S."/>
            <person name="Zhu S.C."/>
            <person name="Zhimulev I."/>
            <person name="Coluzzi M."/>
            <person name="della Torre A."/>
            <person name="Roth C.W."/>
            <person name="Louis C."/>
            <person name="Kalush F."/>
            <person name="Mural R.J."/>
            <person name="Myers E.W."/>
            <person name="Adams M.D."/>
            <person name="Smith H.O."/>
            <person name="Broder S."/>
            <person name="Gardner M.J."/>
            <person name="Fraser C.M."/>
            <person name="Birney E."/>
            <person name="Bork P."/>
            <person name="Brey P.T."/>
            <person name="Venter J.C."/>
            <person name="Weissenbach J."/>
            <person name="Kafatos F.C."/>
            <person name="Collins F.H."/>
            <person name="Hoffman S.L."/>
        </authorList>
    </citation>
    <scope>NUCLEOTIDE SEQUENCE [LARGE SCALE GENOMIC DNA]</scope>
    <source>
        <strain>PEST</strain>
    </source>
</reference>
<name>SPAST_ANOGA</name>
<evidence type="ECO:0000255" key="1"/>
<evidence type="ECO:0000255" key="2">
    <source>
        <dbReference type="HAMAP-Rule" id="MF_03021"/>
    </source>
</evidence>
<evidence type="ECO:0000256" key="3">
    <source>
        <dbReference type="SAM" id="MobiDB-lite"/>
    </source>
</evidence>
<dbReference type="EC" id="5.6.1.1" evidence="2"/>
<dbReference type="EMBL" id="AAAB01008859">
    <property type="protein sequence ID" value="EAA07487.5"/>
    <property type="molecule type" value="Genomic_DNA"/>
</dbReference>
<dbReference type="RefSeq" id="XP_312634.5">
    <property type="nucleotide sequence ID" value="XM_312634.5"/>
</dbReference>
<dbReference type="SMR" id="Q7QBW0"/>
<dbReference type="FunCoup" id="Q7QBW0">
    <property type="interactions" value="1798"/>
</dbReference>
<dbReference type="STRING" id="7165.Q7QBW0"/>
<dbReference type="PaxDb" id="7165-AGAP002334-PA"/>
<dbReference type="VEuPathDB" id="VectorBase:AGAMI1_003042"/>
<dbReference type="VEuPathDB" id="VectorBase:AGAP002334"/>
<dbReference type="eggNOG" id="KOG0740">
    <property type="taxonomic scope" value="Eukaryota"/>
</dbReference>
<dbReference type="HOGENOM" id="CLU_000688_21_5_1"/>
<dbReference type="InParanoid" id="Q7QBW0"/>
<dbReference type="OMA" id="CNLASHE"/>
<dbReference type="PhylomeDB" id="Q7QBW0"/>
<dbReference type="Proteomes" id="UP000007062">
    <property type="component" value="Chromosome 2R"/>
</dbReference>
<dbReference type="GO" id="GO:0005813">
    <property type="term" value="C:centrosome"/>
    <property type="evidence" value="ECO:0007669"/>
    <property type="project" value="UniProtKB-SubCell"/>
</dbReference>
<dbReference type="GO" id="GO:0005737">
    <property type="term" value="C:cytoplasm"/>
    <property type="evidence" value="ECO:0007669"/>
    <property type="project" value="UniProtKB-UniRule"/>
</dbReference>
<dbReference type="GO" id="GO:0016020">
    <property type="term" value="C:membrane"/>
    <property type="evidence" value="ECO:0007669"/>
    <property type="project" value="UniProtKB-SubCell"/>
</dbReference>
<dbReference type="GO" id="GO:0005874">
    <property type="term" value="C:microtubule"/>
    <property type="evidence" value="ECO:0007669"/>
    <property type="project" value="UniProtKB-UniRule"/>
</dbReference>
<dbReference type="GO" id="GO:0015630">
    <property type="term" value="C:microtubule cytoskeleton"/>
    <property type="evidence" value="ECO:0000318"/>
    <property type="project" value="GO_Central"/>
</dbReference>
<dbReference type="GO" id="GO:0005819">
    <property type="term" value="C:spindle"/>
    <property type="evidence" value="ECO:0007669"/>
    <property type="project" value="UniProtKB-UniRule"/>
</dbReference>
<dbReference type="GO" id="GO:0005524">
    <property type="term" value="F:ATP binding"/>
    <property type="evidence" value="ECO:0007669"/>
    <property type="project" value="UniProtKB-UniRule"/>
</dbReference>
<dbReference type="GO" id="GO:0016887">
    <property type="term" value="F:ATP hydrolysis activity"/>
    <property type="evidence" value="ECO:0000318"/>
    <property type="project" value="GO_Central"/>
</dbReference>
<dbReference type="GO" id="GO:0008017">
    <property type="term" value="F:microtubule binding"/>
    <property type="evidence" value="ECO:0000250"/>
    <property type="project" value="UniProtKB"/>
</dbReference>
<dbReference type="GO" id="GO:0008568">
    <property type="term" value="F:microtubule severing ATPase activity"/>
    <property type="evidence" value="ECO:0000250"/>
    <property type="project" value="UniProtKB"/>
</dbReference>
<dbReference type="GO" id="GO:0051013">
    <property type="term" value="P:microtubule severing"/>
    <property type="evidence" value="ECO:0000250"/>
    <property type="project" value="UniProtKB"/>
</dbReference>
<dbReference type="GO" id="GO:0031117">
    <property type="term" value="P:positive regulation of microtubule depolymerization"/>
    <property type="evidence" value="ECO:0007669"/>
    <property type="project" value="UniProtKB-UniRule"/>
</dbReference>
<dbReference type="GO" id="GO:0034214">
    <property type="term" value="P:protein hexamerization"/>
    <property type="evidence" value="ECO:0007669"/>
    <property type="project" value="UniProtKB-UniRule"/>
</dbReference>
<dbReference type="CDD" id="cd02679">
    <property type="entry name" value="MIT_spastin"/>
    <property type="match status" value="1"/>
</dbReference>
<dbReference type="CDD" id="cd19524">
    <property type="entry name" value="RecA-like_spastin"/>
    <property type="match status" value="1"/>
</dbReference>
<dbReference type="FunFam" id="3.40.50.300:FF:000093">
    <property type="entry name" value="Fidgetin-like 1"/>
    <property type="match status" value="1"/>
</dbReference>
<dbReference type="FunFam" id="1.10.8.60:FF:000036">
    <property type="entry name" value="Spastin"/>
    <property type="match status" value="1"/>
</dbReference>
<dbReference type="FunFam" id="1.20.58.80:FF:000006">
    <property type="entry name" value="Spastin"/>
    <property type="match status" value="1"/>
</dbReference>
<dbReference type="Gene3D" id="1.10.8.60">
    <property type="match status" value="1"/>
</dbReference>
<dbReference type="Gene3D" id="3.40.50.300">
    <property type="entry name" value="P-loop containing nucleotide triphosphate hydrolases"/>
    <property type="match status" value="1"/>
</dbReference>
<dbReference type="Gene3D" id="1.20.58.80">
    <property type="entry name" value="Phosphotransferase system, lactose/cellobiose-type IIA subunit"/>
    <property type="match status" value="1"/>
</dbReference>
<dbReference type="HAMAP" id="MF_03021">
    <property type="entry name" value="Spastin"/>
    <property type="match status" value="1"/>
</dbReference>
<dbReference type="InterPro" id="IPR003593">
    <property type="entry name" value="AAA+_ATPase"/>
</dbReference>
<dbReference type="InterPro" id="IPR041569">
    <property type="entry name" value="AAA_lid_3"/>
</dbReference>
<dbReference type="InterPro" id="IPR003959">
    <property type="entry name" value="ATPase_AAA_core"/>
</dbReference>
<dbReference type="InterPro" id="IPR003960">
    <property type="entry name" value="ATPase_AAA_CS"/>
</dbReference>
<dbReference type="InterPro" id="IPR007330">
    <property type="entry name" value="MIT_dom"/>
</dbReference>
<dbReference type="InterPro" id="IPR050304">
    <property type="entry name" value="MT-severing_AAA_ATPase"/>
</dbReference>
<dbReference type="InterPro" id="IPR027417">
    <property type="entry name" value="P-loop_NTPase"/>
</dbReference>
<dbReference type="InterPro" id="IPR015415">
    <property type="entry name" value="Spast_Vps4_C"/>
</dbReference>
<dbReference type="InterPro" id="IPR017179">
    <property type="entry name" value="Spastin"/>
</dbReference>
<dbReference type="PANTHER" id="PTHR23074">
    <property type="entry name" value="AAA DOMAIN-CONTAINING"/>
    <property type="match status" value="1"/>
</dbReference>
<dbReference type="PANTHER" id="PTHR23074:SF86">
    <property type="entry name" value="SPASTIN"/>
    <property type="match status" value="1"/>
</dbReference>
<dbReference type="Pfam" id="PF00004">
    <property type="entry name" value="AAA"/>
    <property type="match status" value="1"/>
</dbReference>
<dbReference type="Pfam" id="PF17862">
    <property type="entry name" value="AAA_lid_3"/>
    <property type="match status" value="1"/>
</dbReference>
<dbReference type="Pfam" id="PF09336">
    <property type="entry name" value="Vps4_C"/>
    <property type="match status" value="1"/>
</dbReference>
<dbReference type="SMART" id="SM00382">
    <property type="entry name" value="AAA"/>
    <property type="match status" value="1"/>
</dbReference>
<dbReference type="SMART" id="SM00745">
    <property type="entry name" value="MIT"/>
    <property type="match status" value="1"/>
</dbReference>
<dbReference type="SUPFAM" id="SSF81995">
    <property type="entry name" value="beta-sandwich domain of Sec23/24"/>
    <property type="match status" value="1"/>
</dbReference>
<dbReference type="SUPFAM" id="SSF52540">
    <property type="entry name" value="P-loop containing nucleoside triphosphate hydrolases"/>
    <property type="match status" value="1"/>
</dbReference>
<dbReference type="PROSITE" id="PS00674">
    <property type="entry name" value="AAA"/>
    <property type="match status" value="1"/>
</dbReference>
<proteinExistence type="inferred from homology"/>
<sequence>MVRNKYTLTTAGKSPSKKSRTGSLSKQHDATGDDDGETGTLDGSGSAAGSPVGGGTDAAAKRCDGGSVHKQNLYIISFPVIFVFNVLRSLLYQLFIVFRYVYNFTTKVVYRPVRKECGLEIVINTDQHGHHHHHHHRHSSHSIHSTAAAHQLQQHQQQQQHQYSLLQQEQHGVTEPQQQQQQQHQAAHPLQCSQSGILVNGEGREMSIQRSASGSQVGPGDPLLAKQKHHHRRAFEYISKALKIDEDNEDQKELAIELYRKGILELERGIAVECWGGRGEVWERAQRLHDKMQTNLSMARDRLQFLGMLCVCVSVQRKHLHPTRTTLPYRDVKSKLHTTPTENRMVSFNENCTITTNHHPARGTAASSRPTTAATAPATPSLPIKQTASEASGRKLTVGYKRPGNLGVMNKSQTLPRSMGGTRTTPTGTGGAGGIAGGLGNGGTYGGSIVGGGAGMPKIVPKPAATPPAIRRQFSVSIPIPGSSPVRKASNGYGSKNTPPPRSKTPLAGQQPQQPQQQQQQQPQISVKGVEPKLVQIIMDEIVEGGAKVQWQDIAGQEVAKQALQEMVILPSVRPELFTGLRTPAKGLLLFGPPGNGKTLLARAVATECSATFFSISAATLTSKYVGDGEKLVRALFAVARELQPSIIFIDEVDSVLSERSSNEHEATRRLKTEFLVQFDGLPANSEADRIVVMAATNRPQELDEAALRRFPKRVYVTLPDRDTRELLLRRLLQKQGSPLSDADLAHLAQLTEGYSGSDLTALARDAALEPIRELNVEEVKNMDPTKLRSIRESDFHNSLKRIRRSVAPQSLAAYEKWLQDFGDVTL</sequence>
<organism>
    <name type="scientific">Anopheles gambiae</name>
    <name type="common">African malaria mosquito</name>
    <dbReference type="NCBI Taxonomy" id="7165"/>
    <lineage>
        <taxon>Eukaryota</taxon>
        <taxon>Metazoa</taxon>
        <taxon>Ecdysozoa</taxon>
        <taxon>Arthropoda</taxon>
        <taxon>Hexapoda</taxon>
        <taxon>Insecta</taxon>
        <taxon>Pterygota</taxon>
        <taxon>Neoptera</taxon>
        <taxon>Endopterygota</taxon>
        <taxon>Diptera</taxon>
        <taxon>Nematocera</taxon>
        <taxon>Culicoidea</taxon>
        <taxon>Culicidae</taxon>
        <taxon>Anophelinae</taxon>
        <taxon>Anopheles</taxon>
    </lineage>
</organism>
<keyword id="KW-0067">ATP-binding</keyword>
<keyword id="KW-0963">Cytoplasm</keyword>
<keyword id="KW-0206">Cytoskeleton</keyword>
<keyword id="KW-0413">Isomerase</keyword>
<keyword id="KW-0472">Membrane</keyword>
<keyword id="KW-0493">Microtubule</keyword>
<keyword id="KW-0547">Nucleotide-binding</keyword>
<keyword id="KW-1185">Reference proteome</keyword>
<protein>
    <recommendedName>
        <fullName evidence="2">Spastin</fullName>
        <ecNumber evidence="2">5.6.1.1</ecNumber>
    </recommendedName>
</protein>